<reference key="1">
    <citation type="journal article" date="1997" name="Nature">
        <title>The nucleotide sequence of Saccharomyces cerevisiae chromosome XIV and its evolutionary implications.</title>
        <authorList>
            <person name="Philippsen P."/>
            <person name="Kleine K."/>
            <person name="Poehlmann R."/>
            <person name="Duesterhoeft A."/>
            <person name="Hamberg K."/>
            <person name="Hegemann J.H."/>
            <person name="Obermaier B."/>
            <person name="Urrestarazu L.A."/>
            <person name="Aert R."/>
            <person name="Albermann K."/>
            <person name="Altmann R."/>
            <person name="Andre B."/>
            <person name="Baladron V."/>
            <person name="Ballesta J.P.G."/>
            <person name="Becam A.-M."/>
            <person name="Beinhauer J.D."/>
            <person name="Boskovic J."/>
            <person name="Buitrago M.J."/>
            <person name="Bussereau F."/>
            <person name="Coster F."/>
            <person name="Crouzet M."/>
            <person name="D'Angelo M."/>
            <person name="Dal Pero F."/>
            <person name="De Antoni A."/>
            <person name="del Rey F."/>
            <person name="Doignon F."/>
            <person name="Domdey H."/>
            <person name="Dubois E."/>
            <person name="Fiedler T.A."/>
            <person name="Fleig U."/>
            <person name="Floeth M."/>
            <person name="Fritz C."/>
            <person name="Gaillardin C."/>
            <person name="Garcia-Cantalejo J.M."/>
            <person name="Glansdorff N."/>
            <person name="Goffeau A."/>
            <person name="Gueldener U."/>
            <person name="Herbert C.J."/>
            <person name="Heumann K."/>
            <person name="Heuss-Neitzel D."/>
            <person name="Hilbert H."/>
            <person name="Hinni K."/>
            <person name="Iraqui Houssaini I."/>
            <person name="Jacquet M."/>
            <person name="Jimenez A."/>
            <person name="Jonniaux J.-L."/>
            <person name="Karpfinger-Hartl L."/>
            <person name="Lanfranchi G."/>
            <person name="Lepingle A."/>
            <person name="Levesque H."/>
            <person name="Lyck R."/>
            <person name="Maftahi M."/>
            <person name="Mallet L."/>
            <person name="Maurer C.T.C."/>
            <person name="Messenguy F."/>
            <person name="Mewes H.-W."/>
            <person name="Moestl D."/>
            <person name="Nasr F."/>
            <person name="Nicaud J.-M."/>
            <person name="Niedenthal R.K."/>
            <person name="Pandolfo D."/>
            <person name="Pierard A."/>
            <person name="Piravandi E."/>
            <person name="Planta R.J."/>
            <person name="Pohl T.M."/>
            <person name="Purnelle B."/>
            <person name="Rebischung C."/>
            <person name="Remacha M.A."/>
            <person name="Revuelta J.L."/>
            <person name="Rinke M."/>
            <person name="Saiz J.E."/>
            <person name="Sartorello F."/>
            <person name="Scherens B."/>
            <person name="Sen-Gupta M."/>
            <person name="Soler-Mira A."/>
            <person name="Urbanus J.H.M."/>
            <person name="Valle G."/>
            <person name="Van Dyck L."/>
            <person name="Verhasselt P."/>
            <person name="Vierendeels F."/>
            <person name="Vissers S."/>
            <person name="Voet M."/>
            <person name="Volckaert G."/>
            <person name="Wach A."/>
            <person name="Wambutt R."/>
            <person name="Wedler H."/>
            <person name="Zollner A."/>
            <person name="Hani J."/>
        </authorList>
    </citation>
    <scope>NUCLEOTIDE SEQUENCE [LARGE SCALE GENOMIC DNA]</scope>
    <source>
        <strain>ATCC 204508 / S288c</strain>
    </source>
</reference>
<reference key="2">
    <citation type="journal article" date="2014" name="G3 (Bethesda)">
        <title>The reference genome sequence of Saccharomyces cerevisiae: Then and now.</title>
        <authorList>
            <person name="Engel S.R."/>
            <person name="Dietrich F.S."/>
            <person name="Fisk D.G."/>
            <person name="Binkley G."/>
            <person name="Balakrishnan R."/>
            <person name="Costanzo M.C."/>
            <person name="Dwight S.S."/>
            <person name="Hitz B.C."/>
            <person name="Karra K."/>
            <person name="Nash R.S."/>
            <person name="Weng S."/>
            <person name="Wong E.D."/>
            <person name="Lloyd P."/>
            <person name="Skrzypek M.S."/>
            <person name="Miyasato S.R."/>
            <person name="Simison M."/>
            <person name="Cherry J.M."/>
        </authorList>
    </citation>
    <scope>GENOME REANNOTATION</scope>
    <source>
        <strain>ATCC 204508 / S288c</strain>
    </source>
</reference>
<reference key="3">
    <citation type="journal article" date="1999" name="Yeast">
        <title>Identification and characterization of the genes for two topoisomerase I-interacting proteins from Saccharomyces cerevisiae.</title>
        <authorList>
            <person name="Park H."/>
            <person name="Sternglanz R."/>
        </authorList>
    </citation>
    <scope>IDENTIFICATION</scope>
</reference>
<reference key="4">
    <citation type="journal article" date="2001" name="Genetics">
        <title>Tof1p regulates DNA damage responses during S phase in Saccharomyces cerevisiae.</title>
        <authorList>
            <person name="Foss E.J."/>
        </authorList>
    </citation>
    <scope>FUNCTION</scope>
</reference>
<reference key="5">
    <citation type="journal article" date="2003" name="Nature">
        <title>S-phase checkpoint proteins Tof1 and Mrc1 form a stable replication-pausing complex.</title>
        <authorList>
            <person name="Katou Y."/>
            <person name="Kanoh Y."/>
            <person name="Bando M."/>
            <person name="Noguchi H."/>
            <person name="Tanaka H."/>
            <person name="Ashikari T."/>
            <person name="Sugimoto K."/>
            <person name="Shirahige K."/>
        </authorList>
    </citation>
    <scope>FUNCTION</scope>
    <scope>SUBCELLULAR LOCATION</scope>
</reference>
<reference key="6">
    <citation type="journal article" date="2003" name="Nature">
        <title>Global analysis of protein localization in budding yeast.</title>
        <authorList>
            <person name="Huh W.-K."/>
            <person name="Falvo J.V."/>
            <person name="Gerke L.C."/>
            <person name="Carroll A.S."/>
            <person name="Howson R.W."/>
            <person name="Weissman J.S."/>
            <person name="O'Shea E.K."/>
        </authorList>
    </citation>
    <scope>SUBCELLULAR LOCATION [LARGE SCALE ANALYSIS]</scope>
</reference>
<reference key="7">
    <citation type="journal article" date="2003" name="Nature">
        <title>Global analysis of protein expression in yeast.</title>
        <authorList>
            <person name="Ghaemmaghami S."/>
            <person name="Huh W.-K."/>
            <person name="Bower K."/>
            <person name="Howson R.W."/>
            <person name="Belle A."/>
            <person name="Dephoure N."/>
            <person name="O'Shea E.K."/>
            <person name="Weissman J.S."/>
        </authorList>
    </citation>
    <scope>LEVEL OF PROTEIN EXPRESSION [LARGE SCALE ANALYSIS]</scope>
</reference>
<reference key="8">
    <citation type="journal article" date="2004" name="Mol. Biol. Cell">
        <title>Identification of protein complexes required for efficient sister chromatid cohesion.</title>
        <authorList>
            <person name="Mayer M.L."/>
            <person name="Pot I."/>
            <person name="Chang M."/>
            <person name="Xu H."/>
            <person name="Aneliunas V."/>
            <person name="Kwok T."/>
            <person name="Newitt R."/>
            <person name="Aebersold R."/>
            <person name="Boone C."/>
            <person name="Brown G.W."/>
            <person name="Hieter P."/>
        </authorList>
    </citation>
    <scope>FUNCTION</scope>
    <scope>INTERACTION WITH CSM3</scope>
</reference>
<reference key="9">
    <citation type="journal article" date="2004" name="Nucleic Acids Res.">
        <title>Coordinated functions of WSS1, PSY2 and TOF1 in the DNA damage response.</title>
        <authorList>
            <person name="O'Neill B.M."/>
            <person name="Hanway D."/>
            <person name="Winzeler E.A."/>
            <person name="Romesberg F.E."/>
        </authorList>
    </citation>
    <scope>FUNCTION</scope>
    <scope>INTERACTION WITH WSS1</scope>
</reference>
<reference key="10">
    <citation type="journal article" date="2005" name="J. Mol. Biol.">
        <title>Uncoupling of unwinding from DNA synthesis implies regulation of MCM helicase by Tof1/Mrc1/Csm3 checkpoint complex.</title>
        <authorList>
            <person name="Nedelcheva M.N."/>
            <person name="Roguev A."/>
            <person name="Dolapchiev L.B."/>
            <person name="Shevchenko A."/>
            <person name="Taskov H.B."/>
            <person name="Shevchenko A."/>
            <person name="Stewart A.F."/>
            <person name="Stoynov S.S."/>
        </authorList>
    </citation>
    <scope>FUNCTION</scope>
    <scope>IDENTIFICATION IN THE FPC COMPLEX</scope>
    <scope>IDENTIFICATION BY MASS SPECTROMETRY</scope>
</reference>
<reference key="11">
    <citation type="journal article" date="2005" name="Mol. Cell">
        <title>Mrc1 and Tof1 promote replication fork progression and recovery independently of Rad53.</title>
        <authorList>
            <person name="Tourriere H."/>
            <person name="Versini G."/>
            <person name="Cordon-Preciado V."/>
            <person name="Alabert C."/>
            <person name="Pasero P."/>
        </authorList>
    </citation>
    <scope>FUNCTION</scope>
</reference>
<reference key="12">
    <citation type="journal article" date="2005" name="Mol. Cell. Biol.">
        <title>Disruption of mechanisms that prevent rereplication triggers a DNA damage response.</title>
        <authorList>
            <person name="Archambault V."/>
            <person name="Ikui A.E."/>
            <person name="Drapkin B.J."/>
            <person name="Cross F.R."/>
        </authorList>
    </citation>
    <scope>FUNCTION</scope>
</reference>
<reference key="13">
    <citation type="journal article" date="2006" name="DNA Repair">
        <title>Esc4/Rtt107 and the control of recombination during replication.</title>
        <authorList>
            <person name="Chin J.K."/>
            <person name="Bashkirov V.I."/>
            <person name="Heyer W.-D."/>
            <person name="Romesberg F.E."/>
        </authorList>
    </citation>
    <scope>INTERACTION WITH ESC4</scope>
</reference>
<reference key="14">
    <citation type="journal article" date="2006" name="Genetics">
        <title>Genetic analysis of Saccharomyces cerevisiae H2A serine 129 mutant suggests a functional relationship between H2A and the sister-chromatid cohesion partners Csm3-Tof1 for the repair of topoisomerase I-induced DNA damage.</title>
        <authorList>
            <person name="Redon C."/>
            <person name="Pilch D.R."/>
            <person name="Bonner W.M."/>
        </authorList>
    </citation>
    <scope>FUNCTION OF THE FPC COMPLEX</scope>
</reference>
<reference key="15">
    <citation type="journal article" date="2006" name="Proc. Natl. Acad. Sci. U.S.A.">
        <title>The Tof1p-Csm3p protein complex counteracts the Rrm3p helicase to control replication termination of Saccharomyces cerevisiae.</title>
        <authorList>
            <person name="Mohanty B.K."/>
            <person name="Bairwa N.K."/>
            <person name="Bastia D."/>
        </authorList>
    </citation>
    <scope>FUNCTION OF THE FPC COMPLEX</scope>
</reference>
<reference key="16">
    <citation type="journal article" date="2007" name="J. Proteome Res.">
        <title>Large-scale phosphorylation analysis of alpha-factor-arrested Saccharomyces cerevisiae.</title>
        <authorList>
            <person name="Li X."/>
            <person name="Gerber S.A."/>
            <person name="Rudner A.D."/>
            <person name="Beausoleil S.A."/>
            <person name="Haas W."/>
            <person name="Villen J."/>
            <person name="Elias J.E."/>
            <person name="Gygi S.P."/>
        </authorList>
    </citation>
    <scope>PHOSPHORYLATION [LARGE SCALE ANALYSIS] AT SER-1213</scope>
    <scope>IDENTIFICATION BY MASS SPECTROMETRY [LARGE SCALE ANALYSIS]</scope>
    <source>
        <strain>ADR376</strain>
    </source>
</reference>
<reference key="17">
    <citation type="journal article" date="2008" name="Mol. Cell. Proteomics">
        <title>A multidimensional chromatography technology for in-depth phosphoproteome analysis.</title>
        <authorList>
            <person name="Albuquerque C.P."/>
            <person name="Smolka M.B."/>
            <person name="Payne S.H."/>
            <person name="Bafna V."/>
            <person name="Eng J."/>
            <person name="Zhou H."/>
        </authorList>
    </citation>
    <scope>PHOSPHORYLATION [LARGE SCALE ANALYSIS] AT SER-626; SER-654 AND SER-1213</scope>
    <scope>IDENTIFICATION BY MASS SPECTROMETRY [LARGE SCALE ANALYSIS]</scope>
</reference>
<reference key="18">
    <citation type="journal article" date="2009" name="Science">
        <title>Global analysis of Cdk1 substrate phosphorylation sites provides insights into evolution.</title>
        <authorList>
            <person name="Holt L.J."/>
            <person name="Tuch B.B."/>
            <person name="Villen J."/>
            <person name="Johnson A.D."/>
            <person name="Gygi S.P."/>
            <person name="Morgan D.O."/>
        </authorList>
    </citation>
    <scope>PHOSPHORYLATION [LARGE SCALE ANALYSIS] AT SER-1056; SER-1058 AND SER-1213</scope>
    <scope>IDENTIFICATION BY MASS SPECTROMETRY [LARGE SCALE ANALYSIS]</scope>
</reference>
<sequence length="1238" mass="141120">MSADLQQGTTNAADFSLTVLRARIALLATAIGGPDYTSQIDPPPYKLGDDCLACLKDLKRWFKLVDDQQKRWDVAMAVAEYRILTDDLLPILIDWENKCSLAAKLAKNNPDHEEFRNKAYYDKIALNCLQLLVLMTWPLIVTEQSSSNQITLYGELKKHQLVYKKTILSMESGKVLRAAIRLALDVIKIDRLSRTPRDNMVLKLVLNFFRNVIAIEPGEFTINTKKSMPKKGITSIDTLPPNVSMDDISLNTVISSFHKNKVFGFLLTLTSSLSKEFDQDFINIPLLEIMFYFTKDVNQELLFPRQFETGTHSKVVNKNESSSANNIVTSAGFELSKLLQKEHQMRKNVIKHTSARHSRFGGLLSIQTPDKTRLTVSGSQALVDEKIALQKLDDSKKWNKRIIKKHQSVAAEGLPNSLLNSQTGKAIFFTESNGKHFKEFINNFIDSGFNILLHSVTNYFTTEQDRMVTLEQVEYLLFFAWFVKYQLLRSKIDNSADIKQVSEALKEVTFILVSSLLRSAYDLKNWTVTHAGMIAFNELLNLVSRTKAAQEEDSTDIEFIVSRLFSDERIQLLSNLPKIGSKYSLQFMKSCIELTHSVLKVLEQYSDDKTLVIEGKSRRQKKFNISEGDITKLIEEENVDRDEALDILTSSLRSIEVNFQKVQANYMTEPVIETYINFLERFRELEDDSIKKVFSFFHRVFVQAKEQALLFRFDLIILLREMLSPDGLDRMSRSRKYVSQFSDYFLARLKKRLKKSPAWFVGLLFPPLHNSEVGFYQRYGEYNVLNNESMYAAPASQFKPIPDEEALPPSILLDMKYGVLVSTLLDDGKTELLDQLLKHITHTLDIFKSWLTVNVNAGKETVNPPNEYFTLTGVLNNDPIFKDKDYRALLLLIGYSIPRKINEPCFLPGTVEVSDLTVSCELVKKYLSTPFETPNGLPSSSYLLRVRSEKDSFSHNEQDGWEGDDDYDYNDPYIVPDDQILSKSDAAYFKDLDNNASDKLKGTKFSKGIARSKKKDKRKRRKGEAKTNLPMFGDQDDERPQTVRERHGVFSKEFISDSEDDEDLMNPIFFENETYMRWLLDKNNGQLTEDRYIQFAKFAAERMNNGGVVTGDYTSLFGGSIPSIESIRATESSSFAPDKSLISLASHVASEMSIFDVNNNNNNQLSDDDVNSESRNSLGSSQPSNSQNMFQSEVYSRKESTKRSLEASAADESDEDEEAIRLFGKKSRVVLSQGDSDD</sequence>
<accession>P53840</accession>
<accession>D6W0S1</accession>
<keyword id="KW-0002">3D-structure</keyword>
<keyword id="KW-0131">Cell cycle</keyword>
<keyword id="KW-0227">DNA damage</keyword>
<keyword id="KW-0234">DNA repair</keyword>
<keyword id="KW-0236">DNA replication inhibitor</keyword>
<keyword id="KW-0469">Meiosis</keyword>
<keyword id="KW-0539">Nucleus</keyword>
<keyword id="KW-0597">Phosphoprotein</keyword>
<keyword id="KW-1185">Reference proteome</keyword>
<dbReference type="EMBL" id="Z71549">
    <property type="protein sequence ID" value="CAA96181.1"/>
    <property type="molecule type" value="Genomic_DNA"/>
</dbReference>
<dbReference type="EMBL" id="BK006947">
    <property type="protein sequence ID" value="DAA10287.1"/>
    <property type="molecule type" value="Genomic_DNA"/>
</dbReference>
<dbReference type="PIR" id="S63247">
    <property type="entry name" value="S63247"/>
</dbReference>
<dbReference type="RefSeq" id="NP_014126.1">
    <property type="nucleotide sequence ID" value="NM_001183111.1"/>
</dbReference>
<dbReference type="PDB" id="6SKL">
    <property type="method" value="EM"/>
    <property type="resolution" value="3.70 A"/>
    <property type="chains" value="X=1-1238"/>
</dbReference>
<dbReference type="PDB" id="7PMK">
    <property type="method" value="EM"/>
    <property type="resolution" value="3.20 A"/>
    <property type="chains" value="X=1-1238"/>
</dbReference>
<dbReference type="PDB" id="7PMN">
    <property type="method" value="EM"/>
    <property type="resolution" value="3.20 A"/>
    <property type="chains" value="X=1-1238"/>
</dbReference>
<dbReference type="PDB" id="8B9A">
    <property type="method" value="EM"/>
    <property type="resolution" value="3.50 A"/>
    <property type="chains" value="X=1-1238"/>
</dbReference>
<dbReference type="PDB" id="8B9B">
    <property type="method" value="EM"/>
    <property type="resolution" value="3.50 A"/>
    <property type="chains" value="X=1-1238"/>
</dbReference>
<dbReference type="PDB" id="8B9C">
    <property type="method" value="EM"/>
    <property type="resolution" value="4.60 A"/>
    <property type="chains" value="X=1-1238"/>
</dbReference>
<dbReference type="PDB" id="8KG6">
    <property type="method" value="EM"/>
    <property type="resolution" value="3.07 A"/>
    <property type="chains" value="K=1-1238"/>
</dbReference>
<dbReference type="PDB" id="8XGC">
    <property type="method" value="EM"/>
    <property type="resolution" value="3.70 A"/>
    <property type="chains" value="I=1-1238"/>
</dbReference>
<dbReference type="PDBsum" id="6SKL"/>
<dbReference type="PDBsum" id="7PMK"/>
<dbReference type="PDBsum" id="7PMN"/>
<dbReference type="PDBsum" id="8B9A"/>
<dbReference type="PDBsum" id="8B9B"/>
<dbReference type="PDBsum" id="8B9C"/>
<dbReference type="PDBsum" id="8KG6"/>
<dbReference type="PDBsum" id="8XGC"/>
<dbReference type="EMDB" id="EMD-10227"/>
<dbReference type="EMDB" id="EMD-13537"/>
<dbReference type="EMDB" id="EMD-13539"/>
<dbReference type="EMDB" id="EMD-15924"/>
<dbReference type="EMDB" id="EMD-37211"/>
<dbReference type="EMDB" id="EMD-38317"/>
<dbReference type="SMR" id="P53840"/>
<dbReference type="BioGRID" id="35567">
    <property type="interactions" value="336"/>
</dbReference>
<dbReference type="ComplexPortal" id="CPX-1673">
    <property type="entry name" value="Replication fork protection complex"/>
</dbReference>
<dbReference type="DIP" id="DIP-4272N"/>
<dbReference type="FunCoup" id="P53840">
    <property type="interactions" value="83"/>
</dbReference>
<dbReference type="IntAct" id="P53840">
    <property type="interactions" value="12"/>
</dbReference>
<dbReference type="MINT" id="P53840"/>
<dbReference type="STRING" id="4932.YNL273W"/>
<dbReference type="iPTMnet" id="P53840"/>
<dbReference type="PaxDb" id="4932-YNL273W"/>
<dbReference type="PeptideAtlas" id="P53840"/>
<dbReference type="EnsemblFungi" id="YNL273W_mRNA">
    <property type="protein sequence ID" value="YNL273W"/>
    <property type="gene ID" value="YNL273W"/>
</dbReference>
<dbReference type="GeneID" id="855448"/>
<dbReference type="KEGG" id="sce:YNL273W"/>
<dbReference type="AGR" id="SGD:S000005217"/>
<dbReference type="SGD" id="S000005217">
    <property type="gene designation" value="TOF1"/>
</dbReference>
<dbReference type="VEuPathDB" id="FungiDB:YNL273W"/>
<dbReference type="eggNOG" id="KOG1974">
    <property type="taxonomic scope" value="Eukaryota"/>
</dbReference>
<dbReference type="GeneTree" id="ENSGT00390000015124"/>
<dbReference type="HOGENOM" id="CLU_008440_0_0_1"/>
<dbReference type="InParanoid" id="P53840"/>
<dbReference type="OMA" id="VNHHRHT"/>
<dbReference type="OrthoDB" id="310853at2759"/>
<dbReference type="BioCyc" id="YEAST:G3O-33267-MONOMER"/>
<dbReference type="BioGRID-ORCS" id="855448">
    <property type="hits" value="2 hits in 10 CRISPR screens"/>
</dbReference>
<dbReference type="PRO" id="PR:P53840"/>
<dbReference type="Proteomes" id="UP000002311">
    <property type="component" value="Chromosome XIV"/>
</dbReference>
<dbReference type="RNAct" id="P53840">
    <property type="molecule type" value="protein"/>
</dbReference>
<dbReference type="GO" id="GO:0005829">
    <property type="term" value="C:cytosol"/>
    <property type="evidence" value="ECO:0000314"/>
    <property type="project" value="SGD"/>
</dbReference>
<dbReference type="GO" id="GO:0043596">
    <property type="term" value="C:nuclear replication fork"/>
    <property type="evidence" value="ECO:0000314"/>
    <property type="project" value="SGD"/>
</dbReference>
<dbReference type="GO" id="GO:0005634">
    <property type="term" value="C:nucleus"/>
    <property type="evidence" value="ECO:0000314"/>
    <property type="project" value="ComplexPortal"/>
</dbReference>
<dbReference type="GO" id="GO:0031298">
    <property type="term" value="C:replication fork protection complex"/>
    <property type="evidence" value="ECO:0000314"/>
    <property type="project" value="SGD"/>
</dbReference>
<dbReference type="GO" id="GO:0003677">
    <property type="term" value="F:DNA binding"/>
    <property type="evidence" value="ECO:0000318"/>
    <property type="project" value="GO_Central"/>
</dbReference>
<dbReference type="GO" id="GO:0006281">
    <property type="term" value="P:DNA repair"/>
    <property type="evidence" value="ECO:0000314"/>
    <property type="project" value="ComplexPortal"/>
</dbReference>
<dbReference type="GO" id="GO:0006260">
    <property type="term" value="P:DNA replication"/>
    <property type="evidence" value="ECO:0000315"/>
    <property type="project" value="SGD"/>
</dbReference>
<dbReference type="GO" id="GO:0000076">
    <property type="term" value="P:DNA replication checkpoint signaling"/>
    <property type="evidence" value="ECO:0000315"/>
    <property type="project" value="SGD"/>
</dbReference>
<dbReference type="GO" id="GO:0043570">
    <property type="term" value="P:maintenance of DNA repeat elements"/>
    <property type="evidence" value="ECO:0000315"/>
    <property type="project" value="SGD"/>
</dbReference>
<dbReference type="GO" id="GO:0051321">
    <property type="term" value="P:meiotic cell cycle"/>
    <property type="evidence" value="ECO:0007669"/>
    <property type="project" value="UniProtKB-KW"/>
</dbReference>
<dbReference type="GO" id="GO:0007064">
    <property type="term" value="P:mitotic sister chromatid cohesion"/>
    <property type="evidence" value="ECO:0000315"/>
    <property type="project" value="SGD"/>
</dbReference>
<dbReference type="GO" id="GO:0043111">
    <property type="term" value="P:replication fork arrest"/>
    <property type="evidence" value="ECO:0000315"/>
    <property type="project" value="SGD"/>
</dbReference>
<dbReference type="GO" id="GO:0031297">
    <property type="term" value="P:replication fork processing"/>
    <property type="evidence" value="ECO:0000315"/>
    <property type="project" value="SGD"/>
</dbReference>
<dbReference type="InterPro" id="IPR044998">
    <property type="entry name" value="Timeless"/>
</dbReference>
<dbReference type="InterPro" id="IPR006906">
    <property type="entry name" value="Timeless_N"/>
</dbReference>
<dbReference type="PANTHER" id="PTHR22940:SF4">
    <property type="entry name" value="PROTEIN TIMELESS HOMOLOG"/>
    <property type="match status" value="1"/>
</dbReference>
<dbReference type="PANTHER" id="PTHR22940">
    <property type="entry name" value="TIMEOUT/TIMELESS-2"/>
    <property type="match status" value="1"/>
</dbReference>
<dbReference type="Pfam" id="PF04821">
    <property type="entry name" value="TIMELESS"/>
    <property type="match status" value="1"/>
</dbReference>
<evidence type="ECO:0000256" key="1">
    <source>
        <dbReference type="SAM" id="MobiDB-lite"/>
    </source>
</evidence>
<evidence type="ECO:0000269" key="2">
    <source>
    </source>
</evidence>
<evidence type="ECO:0000269" key="3">
    <source>
    </source>
</evidence>
<evidence type="ECO:0000269" key="4">
    <source>
    </source>
</evidence>
<evidence type="ECO:0000269" key="5">
    <source>
    </source>
</evidence>
<evidence type="ECO:0000269" key="6">
    <source>
    </source>
</evidence>
<evidence type="ECO:0000269" key="7">
    <source>
    </source>
</evidence>
<evidence type="ECO:0000269" key="8">
    <source>
    </source>
</evidence>
<evidence type="ECO:0000269" key="9">
    <source>
    </source>
</evidence>
<evidence type="ECO:0000269" key="10">
    <source>
    </source>
</evidence>
<evidence type="ECO:0000269" key="11">
    <source>
    </source>
</evidence>
<evidence type="ECO:0000269" key="12">
    <source>
    </source>
</evidence>
<evidence type="ECO:0000269" key="13">
    <source>
    </source>
</evidence>
<evidence type="ECO:0000305" key="14"/>
<evidence type="ECO:0007744" key="15">
    <source>
    </source>
</evidence>
<evidence type="ECO:0007744" key="16">
    <source>
    </source>
</evidence>
<evidence type="ECO:0007744" key="17">
    <source>
    </source>
</evidence>
<evidence type="ECO:0007829" key="18">
    <source>
        <dbReference type="PDB" id="7PMK"/>
    </source>
</evidence>
<name>TOF1_YEAST</name>
<organism>
    <name type="scientific">Saccharomyces cerevisiae (strain ATCC 204508 / S288c)</name>
    <name type="common">Baker's yeast</name>
    <dbReference type="NCBI Taxonomy" id="559292"/>
    <lineage>
        <taxon>Eukaryota</taxon>
        <taxon>Fungi</taxon>
        <taxon>Dikarya</taxon>
        <taxon>Ascomycota</taxon>
        <taxon>Saccharomycotina</taxon>
        <taxon>Saccharomycetes</taxon>
        <taxon>Saccharomycetales</taxon>
        <taxon>Saccharomycetaceae</taxon>
        <taxon>Saccharomyces</taxon>
    </lineage>
</organism>
<gene>
    <name type="primary">TOF1</name>
    <name type="ordered locus">YNL273W</name>
    <name type="ORF">N0636</name>
</gene>
<protein>
    <recommendedName>
        <fullName>Topoisomerase 1-associated factor 1</fullName>
    </recommendedName>
</protein>
<feature type="chain" id="PRO_0000072620" description="Topoisomerase 1-associated factor 1">
    <location>
        <begin position="1"/>
        <end position="1238"/>
    </location>
</feature>
<feature type="region of interest" description="Disordered" evidence="1">
    <location>
        <begin position="1008"/>
        <end position="1051"/>
    </location>
</feature>
<feature type="region of interest" description="Disordered" evidence="1">
    <location>
        <begin position="1159"/>
        <end position="1218"/>
    </location>
</feature>
<feature type="compositionally biased region" description="Basic residues" evidence="1">
    <location>
        <begin position="1010"/>
        <end position="1023"/>
    </location>
</feature>
<feature type="compositionally biased region" description="Basic and acidic residues" evidence="1">
    <location>
        <begin position="1038"/>
        <end position="1050"/>
    </location>
</feature>
<feature type="compositionally biased region" description="Polar residues" evidence="1">
    <location>
        <begin position="1173"/>
        <end position="1194"/>
    </location>
</feature>
<feature type="compositionally biased region" description="Basic and acidic residues" evidence="1">
    <location>
        <begin position="1195"/>
        <end position="1205"/>
    </location>
</feature>
<feature type="compositionally biased region" description="Acidic residues" evidence="1">
    <location>
        <begin position="1209"/>
        <end position="1218"/>
    </location>
</feature>
<feature type="modified residue" description="Phosphoserine" evidence="16">
    <location>
        <position position="626"/>
    </location>
</feature>
<feature type="modified residue" description="Phosphoserine" evidence="16">
    <location>
        <position position="654"/>
    </location>
</feature>
<feature type="modified residue" description="Phosphoserine" evidence="17">
    <location>
        <position position="1056"/>
    </location>
</feature>
<feature type="modified residue" description="Phosphoserine" evidence="17">
    <location>
        <position position="1058"/>
    </location>
</feature>
<feature type="modified residue" description="Phosphoserine" evidence="15 16 17">
    <location>
        <position position="1213"/>
    </location>
</feature>
<feature type="helix" evidence="18">
    <location>
        <begin position="14"/>
        <end position="31"/>
    </location>
</feature>
<feature type="strand" evidence="18">
    <location>
        <begin position="32"/>
        <end position="34"/>
    </location>
</feature>
<feature type="strand" evidence="18">
    <location>
        <begin position="45"/>
        <end position="47"/>
    </location>
</feature>
<feature type="helix" evidence="18">
    <location>
        <begin position="51"/>
        <end position="64"/>
    </location>
</feature>
<feature type="turn" evidence="18">
    <location>
        <begin position="65"/>
        <end position="70"/>
    </location>
</feature>
<feature type="helix" evidence="18">
    <location>
        <begin position="73"/>
        <end position="80"/>
    </location>
</feature>
<feature type="helix" evidence="18">
    <location>
        <begin position="83"/>
        <end position="86"/>
    </location>
</feature>
<feature type="helix" evidence="18">
    <location>
        <begin position="88"/>
        <end position="103"/>
    </location>
</feature>
<feature type="helix" evidence="18">
    <location>
        <begin position="118"/>
        <end position="135"/>
    </location>
</feature>
<feature type="helix" evidence="18">
    <location>
        <begin position="147"/>
        <end position="169"/>
    </location>
</feature>
<feature type="helix" evidence="18">
    <location>
        <begin position="170"/>
        <end position="173"/>
    </location>
</feature>
<feature type="helix" evidence="18">
    <location>
        <begin position="174"/>
        <end position="187"/>
    </location>
</feature>
<feature type="turn" evidence="18">
    <location>
        <begin position="191"/>
        <end position="193"/>
    </location>
</feature>
<feature type="helix" evidence="18">
    <location>
        <begin position="196"/>
        <end position="214"/>
    </location>
</feature>
<feature type="strand" evidence="18">
    <location>
        <begin position="220"/>
        <end position="223"/>
    </location>
</feature>
<feature type="helix" evidence="18">
    <location>
        <begin position="245"/>
        <end position="248"/>
    </location>
</feature>
<feature type="helix" evidence="18">
    <location>
        <begin position="250"/>
        <end position="259"/>
    </location>
</feature>
<feature type="helix" evidence="18">
    <location>
        <begin position="262"/>
        <end position="271"/>
    </location>
</feature>
<feature type="helix" evidence="18">
    <location>
        <begin position="283"/>
        <end position="294"/>
    </location>
</feature>
<feature type="helix" evidence="18">
    <location>
        <begin position="299"/>
        <end position="302"/>
    </location>
</feature>
<feature type="helix" evidence="18">
    <location>
        <begin position="330"/>
        <end position="351"/>
    </location>
</feature>
<feature type="helix" evidence="18">
    <location>
        <begin position="358"/>
        <end position="360"/>
    </location>
</feature>
<feature type="strand" evidence="18">
    <location>
        <begin position="364"/>
        <end position="367"/>
    </location>
</feature>
<feature type="strand" evidence="18">
    <location>
        <begin position="369"/>
        <end position="371"/>
    </location>
</feature>
<feature type="strand" evidence="18">
    <location>
        <begin position="373"/>
        <end position="376"/>
    </location>
</feature>
<feature type="helix" evidence="18">
    <location>
        <begin position="381"/>
        <end position="383"/>
    </location>
</feature>
<feature type="helix" evidence="18">
    <location>
        <begin position="385"/>
        <end position="394"/>
    </location>
</feature>
<feature type="turn" evidence="18">
    <location>
        <begin position="418"/>
        <end position="420"/>
    </location>
</feature>
<feature type="helix" evidence="18">
    <location>
        <begin position="431"/>
        <end position="447"/>
    </location>
</feature>
<feature type="helix" evidence="18">
    <location>
        <begin position="449"/>
        <end position="460"/>
    </location>
</feature>
<feature type="helix" evidence="18">
    <location>
        <begin position="464"/>
        <end position="466"/>
    </location>
</feature>
<feature type="helix" evidence="18">
    <location>
        <begin position="469"/>
        <end position="492"/>
    </location>
</feature>
<feature type="helix" evidence="18">
    <location>
        <begin position="498"/>
        <end position="505"/>
    </location>
</feature>
<feature type="helix" evidence="18">
    <location>
        <begin position="507"/>
        <end position="522"/>
    </location>
</feature>
<feature type="helix" evidence="18">
    <location>
        <begin position="526"/>
        <end position="549"/>
    </location>
</feature>
<feature type="helix" evidence="18">
    <location>
        <begin position="557"/>
        <end position="564"/>
    </location>
</feature>
<feature type="helix" evidence="18">
    <location>
        <begin position="568"/>
        <end position="579"/>
    </location>
</feature>
<feature type="helix" evidence="18">
    <location>
        <begin position="580"/>
        <end position="582"/>
    </location>
</feature>
<feature type="helix" evidence="18">
    <location>
        <begin position="585"/>
        <end position="605"/>
    </location>
</feature>
<feature type="helix" evidence="18">
    <location>
        <begin position="659"/>
        <end position="666"/>
    </location>
</feature>
<feature type="helix" evidence="18">
    <location>
        <begin position="669"/>
        <end position="679"/>
    </location>
</feature>
<feature type="turn" evidence="18">
    <location>
        <begin position="680"/>
        <end position="684"/>
    </location>
</feature>
<feature type="helix" evidence="18">
    <location>
        <begin position="687"/>
        <end position="702"/>
    </location>
</feature>
<feature type="helix" evidence="18">
    <location>
        <begin position="707"/>
        <end position="710"/>
    </location>
</feature>
<feature type="helix" evidence="18">
    <location>
        <begin position="713"/>
        <end position="723"/>
    </location>
</feature>
<feature type="helix" evidence="18">
    <location>
        <begin position="733"/>
        <end position="755"/>
    </location>
</feature>
<feature type="helix" evidence="18">
    <location>
        <begin position="759"/>
        <end position="762"/>
    </location>
</feature>
<feature type="helix" evidence="18">
    <location>
        <begin position="771"/>
        <end position="779"/>
    </location>
</feature>
<comment type="function">
    <text evidence="2 3 6 7 8 9 10 11 12">Forms a fork protection complex (FPC) with CSM3 and which is required for chromosome segregation during meiosis and DNA damage repair. FPC coordinates leading and lagging strand synthesis and moves with the replication fork. FPC stabilizes replication forks in a configuration that is recognized by replication checkpoint sensors and protects stalled replication forks against the fork-releasing activity of RRM3 helicase.</text>
</comment>
<comment type="subunit">
    <text evidence="6 7 8 13">Component of the fork protection complex (FPC) consisting of TOF1 and CSM3. Interacts with WSS1 and ESC4.</text>
</comment>
<comment type="interaction">
    <interactant intactId="EBI-28257">
        <id>P53840</id>
    </interactant>
    <interactant intactId="EBI-4292">
        <id>Q08032</id>
        <label>CDC45</label>
    </interactant>
    <organismsDiffer>false</organismsDiffer>
    <experiments>3</experiments>
</comment>
<comment type="interaction">
    <interactant intactId="EBI-28257">
        <id>P53840</id>
    </interactant>
    <interactant intactId="EBI-28093">
        <id>Q04659</id>
        <label>CSM3</label>
    </interactant>
    <organismsDiffer>false</organismsDiffer>
    <experiments>7</experiments>
</comment>
<comment type="interaction">
    <interactant intactId="EBI-28257">
        <id>P53840</id>
    </interactant>
    <interactant intactId="EBI-412442">
        <id>P25588</id>
        <label>MRC1</label>
    </interactant>
    <organismsDiffer>false</organismsDiffer>
    <experiments>4</experiments>
</comment>
<comment type="subcellular location">
    <subcellularLocation>
        <location evidence="3 4">Nucleus</location>
    </subcellularLocation>
    <text>Associated with chromatin during S phase.</text>
</comment>
<comment type="miscellaneous">
    <text evidence="5">Present with 952 molecules/cell in log phase SD medium.</text>
</comment>
<comment type="similarity">
    <text evidence="14">Belongs to the timeless family.</text>
</comment>
<proteinExistence type="evidence at protein level"/>